<proteinExistence type="inferred from homology"/>
<sequence>MAKAKFERTKPHVNVGTIGHVDHGKTTLTAALTKIGAERFGGEFKAYDAIDAAPEEKARGITISTAHVEYESPTRHYAHVDCPGHADYVKNMITGAAQMDGAILVCSAADGPMPQTREHILLSRQVGVPHIVVFLNKADMVDDAELLELVEMEVRELLSKYDFPGDDTPIIHGSARLALDGDQSDIGVPAILKLVEALDSFIPEPTRDVDRPFLMPVEDVFSISGRGTVVTGRIERGIIKVGDEIEIVGIRDTQKTTVTGVEMFRKLLDQGQAGDNAGLLLRGTKRDDVERGQVLCKPGSIKPHTEFEAEVYVLSKDEGGRHTPFFKGYRPQFYFRTTDITGACQLPEGVEMVMPGDNVKMVVTLINPVAMDEGLRFAIREGGRTVGAGVVAKIIK</sequence>
<protein>
    <recommendedName>
        <fullName evidence="2">Elongation factor Tu</fullName>
        <shortName evidence="2">EF-Tu</shortName>
        <ecNumber evidence="2">3.6.5.3</ecNumber>
    </recommendedName>
</protein>
<name>EFTU_XANE5</name>
<keyword id="KW-0963">Cytoplasm</keyword>
<keyword id="KW-0251">Elongation factor</keyword>
<keyword id="KW-0342">GTP-binding</keyword>
<keyword id="KW-0378">Hydrolase</keyword>
<keyword id="KW-0460">Magnesium</keyword>
<keyword id="KW-0479">Metal-binding</keyword>
<keyword id="KW-0547">Nucleotide-binding</keyword>
<keyword id="KW-0648">Protein biosynthesis</keyword>
<dbReference type="EC" id="3.6.5.3" evidence="2"/>
<dbReference type="EMBL" id="AM039952">
    <property type="protein sequence ID" value="CAJ22615.1"/>
    <property type="molecule type" value="Genomic_DNA"/>
</dbReference>
<dbReference type="EMBL" id="AM039952">
    <property type="protein sequence ID" value="CAJ22627.1"/>
    <property type="molecule type" value="Genomic_DNA"/>
</dbReference>
<dbReference type="SMR" id="Q3BWY6"/>
<dbReference type="STRING" id="456327.BJD11_17755"/>
<dbReference type="KEGG" id="xcv:XCV0984"/>
<dbReference type="KEGG" id="xcv:XCV0996"/>
<dbReference type="eggNOG" id="COG0050">
    <property type="taxonomic scope" value="Bacteria"/>
</dbReference>
<dbReference type="HOGENOM" id="CLU_007265_0_0_6"/>
<dbReference type="Proteomes" id="UP000007069">
    <property type="component" value="Chromosome"/>
</dbReference>
<dbReference type="GO" id="GO:0005829">
    <property type="term" value="C:cytosol"/>
    <property type="evidence" value="ECO:0007669"/>
    <property type="project" value="TreeGrafter"/>
</dbReference>
<dbReference type="GO" id="GO:0005525">
    <property type="term" value="F:GTP binding"/>
    <property type="evidence" value="ECO:0007669"/>
    <property type="project" value="UniProtKB-UniRule"/>
</dbReference>
<dbReference type="GO" id="GO:0003924">
    <property type="term" value="F:GTPase activity"/>
    <property type="evidence" value="ECO:0007669"/>
    <property type="project" value="InterPro"/>
</dbReference>
<dbReference type="GO" id="GO:0097216">
    <property type="term" value="F:guanosine tetraphosphate binding"/>
    <property type="evidence" value="ECO:0007669"/>
    <property type="project" value="UniProtKB-ARBA"/>
</dbReference>
<dbReference type="GO" id="GO:0003746">
    <property type="term" value="F:translation elongation factor activity"/>
    <property type="evidence" value="ECO:0007669"/>
    <property type="project" value="UniProtKB-UniRule"/>
</dbReference>
<dbReference type="CDD" id="cd01884">
    <property type="entry name" value="EF_Tu"/>
    <property type="match status" value="1"/>
</dbReference>
<dbReference type="CDD" id="cd03697">
    <property type="entry name" value="EFTU_II"/>
    <property type="match status" value="1"/>
</dbReference>
<dbReference type="CDD" id="cd03707">
    <property type="entry name" value="EFTU_III"/>
    <property type="match status" value="1"/>
</dbReference>
<dbReference type="FunFam" id="2.40.30.10:FF:000001">
    <property type="entry name" value="Elongation factor Tu"/>
    <property type="match status" value="1"/>
</dbReference>
<dbReference type="FunFam" id="3.40.50.300:FF:000003">
    <property type="entry name" value="Elongation factor Tu"/>
    <property type="match status" value="1"/>
</dbReference>
<dbReference type="Gene3D" id="3.40.50.300">
    <property type="entry name" value="P-loop containing nucleotide triphosphate hydrolases"/>
    <property type="match status" value="1"/>
</dbReference>
<dbReference type="Gene3D" id="2.40.30.10">
    <property type="entry name" value="Translation factors"/>
    <property type="match status" value="2"/>
</dbReference>
<dbReference type="HAMAP" id="MF_00118_B">
    <property type="entry name" value="EF_Tu_B"/>
    <property type="match status" value="1"/>
</dbReference>
<dbReference type="InterPro" id="IPR041709">
    <property type="entry name" value="EF-Tu_GTP-bd"/>
</dbReference>
<dbReference type="InterPro" id="IPR050055">
    <property type="entry name" value="EF-Tu_GTPase"/>
</dbReference>
<dbReference type="InterPro" id="IPR004161">
    <property type="entry name" value="EFTu-like_2"/>
</dbReference>
<dbReference type="InterPro" id="IPR033720">
    <property type="entry name" value="EFTU_2"/>
</dbReference>
<dbReference type="InterPro" id="IPR031157">
    <property type="entry name" value="G_TR_CS"/>
</dbReference>
<dbReference type="InterPro" id="IPR027417">
    <property type="entry name" value="P-loop_NTPase"/>
</dbReference>
<dbReference type="InterPro" id="IPR005225">
    <property type="entry name" value="Small_GTP-bd"/>
</dbReference>
<dbReference type="InterPro" id="IPR000795">
    <property type="entry name" value="T_Tr_GTP-bd_dom"/>
</dbReference>
<dbReference type="InterPro" id="IPR009000">
    <property type="entry name" value="Transl_B-barrel_sf"/>
</dbReference>
<dbReference type="InterPro" id="IPR009001">
    <property type="entry name" value="Transl_elong_EF1A/Init_IF2_C"/>
</dbReference>
<dbReference type="InterPro" id="IPR004541">
    <property type="entry name" value="Transl_elong_EFTu/EF1A_bac/org"/>
</dbReference>
<dbReference type="InterPro" id="IPR004160">
    <property type="entry name" value="Transl_elong_EFTu/EF1A_C"/>
</dbReference>
<dbReference type="NCBIfam" id="TIGR00485">
    <property type="entry name" value="EF-Tu"/>
    <property type="match status" value="1"/>
</dbReference>
<dbReference type="NCBIfam" id="NF000766">
    <property type="entry name" value="PRK00049.1"/>
    <property type="match status" value="1"/>
</dbReference>
<dbReference type="NCBIfam" id="NF009372">
    <property type="entry name" value="PRK12735.1"/>
    <property type="match status" value="1"/>
</dbReference>
<dbReference type="NCBIfam" id="NF009373">
    <property type="entry name" value="PRK12736.1"/>
    <property type="match status" value="1"/>
</dbReference>
<dbReference type="NCBIfam" id="TIGR00231">
    <property type="entry name" value="small_GTP"/>
    <property type="match status" value="1"/>
</dbReference>
<dbReference type="PANTHER" id="PTHR43721:SF22">
    <property type="entry name" value="ELONGATION FACTOR TU, MITOCHONDRIAL"/>
    <property type="match status" value="1"/>
</dbReference>
<dbReference type="PANTHER" id="PTHR43721">
    <property type="entry name" value="ELONGATION FACTOR TU-RELATED"/>
    <property type="match status" value="1"/>
</dbReference>
<dbReference type="Pfam" id="PF00009">
    <property type="entry name" value="GTP_EFTU"/>
    <property type="match status" value="1"/>
</dbReference>
<dbReference type="Pfam" id="PF03144">
    <property type="entry name" value="GTP_EFTU_D2"/>
    <property type="match status" value="1"/>
</dbReference>
<dbReference type="Pfam" id="PF03143">
    <property type="entry name" value="GTP_EFTU_D3"/>
    <property type="match status" value="1"/>
</dbReference>
<dbReference type="PRINTS" id="PR00315">
    <property type="entry name" value="ELONGATNFCT"/>
</dbReference>
<dbReference type="SUPFAM" id="SSF50465">
    <property type="entry name" value="EF-Tu/eEF-1alpha/eIF2-gamma C-terminal domain"/>
    <property type="match status" value="1"/>
</dbReference>
<dbReference type="SUPFAM" id="SSF52540">
    <property type="entry name" value="P-loop containing nucleoside triphosphate hydrolases"/>
    <property type="match status" value="1"/>
</dbReference>
<dbReference type="SUPFAM" id="SSF50447">
    <property type="entry name" value="Translation proteins"/>
    <property type="match status" value="1"/>
</dbReference>
<dbReference type="PROSITE" id="PS00301">
    <property type="entry name" value="G_TR_1"/>
    <property type="match status" value="1"/>
</dbReference>
<dbReference type="PROSITE" id="PS51722">
    <property type="entry name" value="G_TR_2"/>
    <property type="match status" value="1"/>
</dbReference>
<gene>
    <name evidence="2" type="primary">tuf1</name>
    <name type="synonym">tufA</name>
    <name type="ordered locus">XCV0984</name>
</gene>
<gene>
    <name evidence="2" type="primary">tuf2</name>
    <name type="synonym">tufB</name>
    <name type="ordered locus">XCV0996</name>
</gene>
<organism>
    <name type="scientific">Xanthomonas euvesicatoria pv. vesicatoria (strain 85-10)</name>
    <name type="common">Xanthomonas campestris pv. vesicatoria</name>
    <dbReference type="NCBI Taxonomy" id="316273"/>
    <lineage>
        <taxon>Bacteria</taxon>
        <taxon>Pseudomonadati</taxon>
        <taxon>Pseudomonadota</taxon>
        <taxon>Gammaproteobacteria</taxon>
        <taxon>Lysobacterales</taxon>
        <taxon>Lysobacteraceae</taxon>
        <taxon>Xanthomonas</taxon>
    </lineage>
</organism>
<comment type="function">
    <text evidence="2">GTP hydrolase that promotes the GTP-dependent binding of aminoacyl-tRNA to the A-site of ribosomes during protein biosynthesis.</text>
</comment>
<comment type="catalytic activity">
    <reaction evidence="2">
        <text>GTP + H2O = GDP + phosphate + H(+)</text>
        <dbReference type="Rhea" id="RHEA:19669"/>
        <dbReference type="ChEBI" id="CHEBI:15377"/>
        <dbReference type="ChEBI" id="CHEBI:15378"/>
        <dbReference type="ChEBI" id="CHEBI:37565"/>
        <dbReference type="ChEBI" id="CHEBI:43474"/>
        <dbReference type="ChEBI" id="CHEBI:58189"/>
        <dbReference type="EC" id="3.6.5.3"/>
    </reaction>
    <physiologicalReaction direction="left-to-right" evidence="2">
        <dbReference type="Rhea" id="RHEA:19670"/>
    </physiologicalReaction>
</comment>
<comment type="subunit">
    <text evidence="2">Monomer.</text>
</comment>
<comment type="subcellular location">
    <subcellularLocation>
        <location evidence="2">Cytoplasm</location>
    </subcellularLocation>
</comment>
<comment type="similarity">
    <text evidence="2">Belongs to the TRAFAC class translation factor GTPase superfamily. Classic translation factor GTPase family. EF-Tu/EF-1A subfamily.</text>
</comment>
<evidence type="ECO:0000250" key="1"/>
<evidence type="ECO:0000255" key="2">
    <source>
        <dbReference type="HAMAP-Rule" id="MF_00118"/>
    </source>
</evidence>
<feature type="chain" id="PRO_0000337579" description="Elongation factor Tu">
    <location>
        <begin position="1"/>
        <end position="396"/>
    </location>
</feature>
<feature type="domain" description="tr-type G">
    <location>
        <begin position="10"/>
        <end position="206"/>
    </location>
</feature>
<feature type="region of interest" description="G1" evidence="1">
    <location>
        <begin position="19"/>
        <end position="26"/>
    </location>
</feature>
<feature type="region of interest" description="G2" evidence="1">
    <location>
        <begin position="60"/>
        <end position="64"/>
    </location>
</feature>
<feature type="region of interest" description="G3" evidence="1">
    <location>
        <begin position="81"/>
        <end position="84"/>
    </location>
</feature>
<feature type="region of interest" description="G4" evidence="1">
    <location>
        <begin position="136"/>
        <end position="139"/>
    </location>
</feature>
<feature type="region of interest" description="G5" evidence="1">
    <location>
        <begin position="174"/>
        <end position="176"/>
    </location>
</feature>
<feature type="binding site" evidence="2">
    <location>
        <begin position="19"/>
        <end position="26"/>
    </location>
    <ligand>
        <name>GTP</name>
        <dbReference type="ChEBI" id="CHEBI:37565"/>
    </ligand>
</feature>
<feature type="binding site" evidence="2">
    <location>
        <position position="26"/>
    </location>
    <ligand>
        <name>Mg(2+)</name>
        <dbReference type="ChEBI" id="CHEBI:18420"/>
    </ligand>
</feature>
<feature type="binding site" evidence="2">
    <location>
        <begin position="81"/>
        <end position="85"/>
    </location>
    <ligand>
        <name>GTP</name>
        <dbReference type="ChEBI" id="CHEBI:37565"/>
    </ligand>
</feature>
<feature type="binding site" evidence="2">
    <location>
        <begin position="136"/>
        <end position="139"/>
    </location>
    <ligand>
        <name>GTP</name>
        <dbReference type="ChEBI" id="CHEBI:37565"/>
    </ligand>
</feature>
<accession>Q3BWY6</accession>
<reference key="1">
    <citation type="journal article" date="2005" name="J. Bacteriol.">
        <title>Insights into genome plasticity and pathogenicity of the plant pathogenic Bacterium Xanthomonas campestris pv. vesicatoria revealed by the complete genome sequence.</title>
        <authorList>
            <person name="Thieme F."/>
            <person name="Koebnik R."/>
            <person name="Bekel T."/>
            <person name="Berger C."/>
            <person name="Boch J."/>
            <person name="Buettner D."/>
            <person name="Caldana C."/>
            <person name="Gaigalat L."/>
            <person name="Goesmann A."/>
            <person name="Kay S."/>
            <person name="Kirchner O."/>
            <person name="Lanz C."/>
            <person name="Linke B."/>
            <person name="McHardy A.C."/>
            <person name="Meyer F."/>
            <person name="Mittenhuber G."/>
            <person name="Nies D.H."/>
            <person name="Niesbach-Kloesgen U."/>
            <person name="Patschkowski T."/>
            <person name="Rueckert C."/>
            <person name="Rupp O."/>
            <person name="Schneiker S."/>
            <person name="Schuster S.C."/>
            <person name="Vorhoelter F.J."/>
            <person name="Weber E."/>
            <person name="Puehler A."/>
            <person name="Bonas U."/>
            <person name="Bartels D."/>
            <person name="Kaiser O."/>
        </authorList>
    </citation>
    <scope>NUCLEOTIDE SEQUENCE [LARGE SCALE GENOMIC DNA]</scope>
    <source>
        <strain>85-10</strain>
    </source>
</reference>